<sequence length="119" mass="13643">MARVKGGTVTRKRRKKVLKLAKGYYGSKHTLFKSAKEQVMNSYYYAFRDRRQKKRDFRKLWIARINAAARMNGLSYSKLMHGLKLAEIDINRKMLADLAVNDAAAFTALAEQAKDALSK</sequence>
<name>RL20_ENTFA</name>
<proteinExistence type="evidence at protein level"/>
<protein>
    <recommendedName>
        <fullName evidence="1">Large ribosomal subunit protein bL20</fullName>
    </recommendedName>
    <alternativeName>
        <fullName evidence="2">50S ribosomal protein L20</fullName>
    </alternativeName>
</protein>
<feature type="chain" id="PRO_0000177159" description="Large ribosomal subunit protein bL20">
    <location>
        <begin position="1"/>
        <end position="119"/>
    </location>
</feature>
<feature type="helix" evidence="3">
    <location>
        <begin position="9"/>
        <end position="19"/>
    </location>
</feature>
<feature type="turn" evidence="3">
    <location>
        <begin position="20"/>
        <end position="23"/>
    </location>
</feature>
<feature type="helix" evidence="3">
    <location>
        <begin position="26"/>
        <end position="28"/>
    </location>
</feature>
<feature type="helix" evidence="3">
    <location>
        <begin position="32"/>
        <end position="69"/>
    </location>
</feature>
<feature type="helix" evidence="3">
    <location>
        <begin position="70"/>
        <end position="72"/>
    </location>
</feature>
<feature type="helix" evidence="3">
    <location>
        <begin position="76"/>
        <end position="85"/>
    </location>
</feature>
<feature type="helix" evidence="3">
    <location>
        <begin position="92"/>
        <end position="101"/>
    </location>
</feature>
<feature type="helix" evidence="3">
    <location>
        <begin position="103"/>
        <end position="116"/>
    </location>
</feature>
<keyword id="KW-0002">3D-structure</keyword>
<keyword id="KW-1185">Reference proteome</keyword>
<keyword id="KW-0687">Ribonucleoprotein</keyword>
<keyword id="KW-0689">Ribosomal protein</keyword>
<keyword id="KW-0694">RNA-binding</keyword>
<keyword id="KW-0699">rRNA-binding</keyword>
<evidence type="ECO:0000255" key="1">
    <source>
        <dbReference type="HAMAP-Rule" id="MF_00382"/>
    </source>
</evidence>
<evidence type="ECO:0000305" key="2"/>
<evidence type="ECO:0007829" key="3">
    <source>
        <dbReference type="PDB" id="6WU9"/>
    </source>
</evidence>
<organism>
    <name type="scientific">Enterococcus faecalis (strain ATCC 700802 / V583)</name>
    <dbReference type="NCBI Taxonomy" id="226185"/>
    <lineage>
        <taxon>Bacteria</taxon>
        <taxon>Bacillati</taxon>
        <taxon>Bacillota</taxon>
        <taxon>Bacilli</taxon>
        <taxon>Lactobacillales</taxon>
        <taxon>Enterococcaceae</taxon>
        <taxon>Enterococcus</taxon>
    </lineage>
</organism>
<comment type="function">
    <text evidence="1">Binds directly to 23S ribosomal RNA and is necessary for the in vitro assembly process of the 50S ribosomal subunit. It is not involved in the protein synthesizing functions of that subunit.</text>
</comment>
<comment type="similarity">
    <text evidence="1">Belongs to the bacterial ribosomal protein bL20 family.</text>
</comment>
<dbReference type="EMBL" id="AE016830">
    <property type="protein sequence ID" value="AAO80724.1"/>
    <property type="molecule type" value="Genomic_DNA"/>
</dbReference>
<dbReference type="RefSeq" id="NP_814654.1">
    <property type="nucleotide sequence ID" value="NC_004668.1"/>
</dbReference>
<dbReference type="RefSeq" id="WP_002355799.1">
    <property type="nucleotide sequence ID" value="NZ_KE136527.1"/>
</dbReference>
<dbReference type="PDB" id="6WU9">
    <property type="method" value="EM"/>
    <property type="resolution" value="2.90 A"/>
    <property type="chains" value="R=2-119"/>
</dbReference>
<dbReference type="PDB" id="7P7Q">
    <property type="method" value="EM"/>
    <property type="resolution" value="2.40 A"/>
    <property type="chains" value="T=1-119"/>
</dbReference>
<dbReference type="PDB" id="7P7R">
    <property type="method" value="EM"/>
    <property type="resolution" value="2.90 A"/>
    <property type="chains" value="T=1-119"/>
</dbReference>
<dbReference type="PDBsum" id="6WU9"/>
<dbReference type="PDBsum" id="7P7Q"/>
<dbReference type="PDBsum" id="7P7R"/>
<dbReference type="EMDB" id="EMD-13241"/>
<dbReference type="EMDB" id="EMD-13242"/>
<dbReference type="SMR" id="Q837C7"/>
<dbReference type="STRING" id="226185.EF_0916"/>
<dbReference type="EnsemblBacteria" id="AAO80724">
    <property type="protein sequence ID" value="AAO80724"/>
    <property type="gene ID" value="EF_0916"/>
</dbReference>
<dbReference type="GeneID" id="60893253"/>
<dbReference type="KEGG" id="efa:EF0916"/>
<dbReference type="PATRIC" id="fig|226185.45.peg.3124"/>
<dbReference type="eggNOG" id="COG0292">
    <property type="taxonomic scope" value="Bacteria"/>
</dbReference>
<dbReference type="HOGENOM" id="CLU_123265_0_1_9"/>
<dbReference type="Proteomes" id="UP000001415">
    <property type="component" value="Chromosome"/>
</dbReference>
<dbReference type="GO" id="GO:1990904">
    <property type="term" value="C:ribonucleoprotein complex"/>
    <property type="evidence" value="ECO:0007669"/>
    <property type="project" value="UniProtKB-KW"/>
</dbReference>
<dbReference type="GO" id="GO:0005840">
    <property type="term" value="C:ribosome"/>
    <property type="evidence" value="ECO:0007669"/>
    <property type="project" value="UniProtKB-KW"/>
</dbReference>
<dbReference type="GO" id="GO:0019843">
    <property type="term" value="F:rRNA binding"/>
    <property type="evidence" value="ECO:0007669"/>
    <property type="project" value="UniProtKB-UniRule"/>
</dbReference>
<dbReference type="GO" id="GO:0003735">
    <property type="term" value="F:structural constituent of ribosome"/>
    <property type="evidence" value="ECO:0007669"/>
    <property type="project" value="InterPro"/>
</dbReference>
<dbReference type="GO" id="GO:0000027">
    <property type="term" value="P:ribosomal large subunit assembly"/>
    <property type="evidence" value="ECO:0007669"/>
    <property type="project" value="UniProtKB-UniRule"/>
</dbReference>
<dbReference type="GO" id="GO:0006412">
    <property type="term" value="P:translation"/>
    <property type="evidence" value="ECO:0007669"/>
    <property type="project" value="InterPro"/>
</dbReference>
<dbReference type="CDD" id="cd07026">
    <property type="entry name" value="Ribosomal_L20"/>
    <property type="match status" value="1"/>
</dbReference>
<dbReference type="FunFam" id="1.10.1900.20:FF:000001">
    <property type="entry name" value="50S ribosomal protein L20"/>
    <property type="match status" value="1"/>
</dbReference>
<dbReference type="Gene3D" id="6.10.160.10">
    <property type="match status" value="1"/>
</dbReference>
<dbReference type="Gene3D" id="1.10.1900.20">
    <property type="entry name" value="Ribosomal protein L20"/>
    <property type="match status" value="1"/>
</dbReference>
<dbReference type="HAMAP" id="MF_00382">
    <property type="entry name" value="Ribosomal_bL20"/>
    <property type="match status" value="1"/>
</dbReference>
<dbReference type="InterPro" id="IPR005813">
    <property type="entry name" value="Ribosomal_bL20"/>
</dbReference>
<dbReference type="InterPro" id="IPR049946">
    <property type="entry name" value="RIBOSOMAL_L20_CS"/>
</dbReference>
<dbReference type="InterPro" id="IPR035566">
    <property type="entry name" value="Ribosomal_protein_bL20_C"/>
</dbReference>
<dbReference type="NCBIfam" id="TIGR01032">
    <property type="entry name" value="rplT_bact"/>
    <property type="match status" value="1"/>
</dbReference>
<dbReference type="PANTHER" id="PTHR10986">
    <property type="entry name" value="39S RIBOSOMAL PROTEIN L20"/>
    <property type="match status" value="1"/>
</dbReference>
<dbReference type="Pfam" id="PF00453">
    <property type="entry name" value="Ribosomal_L20"/>
    <property type="match status" value="1"/>
</dbReference>
<dbReference type="PRINTS" id="PR00062">
    <property type="entry name" value="RIBOSOMALL20"/>
</dbReference>
<dbReference type="SUPFAM" id="SSF74731">
    <property type="entry name" value="Ribosomal protein L20"/>
    <property type="match status" value="1"/>
</dbReference>
<dbReference type="PROSITE" id="PS00937">
    <property type="entry name" value="RIBOSOMAL_L20"/>
    <property type="match status" value="1"/>
</dbReference>
<accession>Q837C7</accession>
<gene>
    <name evidence="1" type="primary">rplT</name>
    <name type="ordered locus">EF_0916</name>
</gene>
<reference key="1">
    <citation type="journal article" date="2003" name="Science">
        <title>Role of mobile DNA in the evolution of vancomycin-resistant Enterococcus faecalis.</title>
        <authorList>
            <person name="Paulsen I.T."/>
            <person name="Banerjei L."/>
            <person name="Myers G.S.A."/>
            <person name="Nelson K.E."/>
            <person name="Seshadri R."/>
            <person name="Read T.D."/>
            <person name="Fouts D.E."/>
            <person name="Eisen J.A."/>
            <person name="Gill S.R."/>
            <person name="Heidelberg J.F."/>
            <person name="Tettelin H."/>
            <person name="Dodson R.J."/>
            <person name="Umayam L.A."/>
            <person name="Brinkac L.M."/>
            <person name="Beanan M.J."/>
            <person name="Daugherty S.C."/>
            <person name="DeBoy R.T."/>
            <person name="Durkin S.A."/>
            <person name="Kolonay J.F."/>
            <person name="Madupu R."/>
            <person name="Nelson W.C."/>
            <person name="Vamathevan J.J."/>
            <person name="Tran B."/>
            <person name="Upton J."/>
            <person name="Hansen T."/>
            <person name="Shetty J."/>
            <person name="Khouri H.M."/>
            <person name="Utterback T.R."/>
            <person name="Radune D."/>
            <person name="Ketchum K.A."/>
            <person name="Dougherty B.A."/>
            <person name="Fraser C.M."/>
        </authorList>
    </citation>
    <scope>NUCLEOTIDE SEQUENCE [LARGE SCALE GENOMIC DNA]</scope>
    <source>
        <strain>ATCC 700802 / V583</strain>
    </source>
</reference>